<accession>A1UNS0</accession>
<organism>
    <name type="scientific">Mycobacterium sp. (strain KMS)</name>
    <dbReference type="NCBI Taxonomy" id="189918"/>
    <lineage>
        <taxon>Bacteria</taxon>
        <taxon>Bacillati</taxon>
        <taxon>Actinomycetota</taxon>
        <taxon>Actinomycetes</taxon>
        <taxon>Mycobacteriales</taxon>
        <taxon>Mycobacteriaceae</taxon>
        <taxon>Mycobacterium</taxon>
    </lineage>
</organism>
<comment type="function">
    <text evidence="1">Nucleotidyltransferase involved in the post-translational modification of proteins. It can catalyze the addition of adenosine monophosphate (AMP) or uridine monophosphate (UMP) to a protein, resulting in modifications known as AMPylation and UMPylation.</text>
</comment>
<comment type="catalytic activity">
    <reaction evidence="1">
        <text>L-seryl-[protein] + ATP = 3-O-(5'-adenylyl)-L-seryl-[protein] + diphosphate</text>
        <dbReference type="Rhea" id="RHEA:58120"/>
        <dbReference type="Rhea" id="RHEA-COMP:9863"/>
        <dbReference type="Rhea" id="RHEA-COMP:15073"/>
        <dbReference type="ChEBI" id="CHEBI:29999"/>
        <dbReference type="ChEBI" id="CHEBI:30616"/>
        <dbReference type="ChEBI" id="CHEBI:33019"/>
        <dbReference type="ChEBI" id="CHEBI:142516"/>
        <dbReference type="EC" id="2.7.7.108"/>
    </reaction>
</comment>
<comment type="catalytic activity">
    <reaction evidence="1">
        <text>L-threonyl-[protein] + ATP = 3-O-(5'-adenylyl)-L-threonyl-[protein] + diphosphate</text>
        <dbReference type="Rhea" id="RHEA:54292"/>
        <dbReference type="Rhea" id="RHEA-COMP:11060"/>
        <dbReference type="Rhea" id="RHEA-COMP:13847"/>
        <dbReference type="ChEBI" id="CHEBI:30013"/>
        <dbReference type="ChEBI" id="CHEBI:30616"/>
        <dbReference type="ChEBI" id="CHEBI:33019"/>
        <dbReference type="ChEBI" id="CHEBI:138113"/>
        <dbReference type="EC" id="2.7.7.108"/>
    </reaction>
</comment>
<comment type="catalytic activity">
    <reaction evidence="1">
        <text>L-tyrosyl-[protein] + ATP = O-(5'-adenylyl)-L-tyrosyl-[protein] + diphosphate</text>
        <dbReference type="Rhea" id="RHEA:54288"/>
        <dbReference type="Rhea" id="RHEA-COMP:10136"/>
        <dbReference type="Rhea" id="RHEA-COMP:13846"/>
        <dbReference type="ChEBI" id="CHEBI:30616"/>
        <dbReference type="ChEBI" id="CHEBI:33019"/>
        <dbReference type="ChEBI" id="CHEBI:46858"/>
        <dbReference type="ChEBI" id="CHEBI:83624"/>
        <dbReference type="EC" id="2.7.7.108"/>
    </reaction>
</comment>
<comment type="catalytic activity">
    <reaction evidence="1">
        <text>L-histidyl-[protein] + UTP = N(tele)-(5'-uridylyl)-L-histidyl-[protein] + diphosphate</text>
        <dbReference type="Rhea" id="RHEA:83891"/>
        <dbReference type="Rhea" id="RHEA-COMP:9745"/>
        <dbReference type="Rhea" id="RHEA-COMP:20239"/>
        <dbReference type="ChEBI" id="CHEBI:29979"/>
        <dbReference type="ChEBI" id="CHEBI:33019"/>
        <dbReference type="ChEBI" id="CHEBI:46398"/>
        <dbReference type="ChEBI" id="CHEBI:233474"/>
    </reaction>
</comment>
<comment type="catalytic activity">
    <reaction evidence="1">
        <text>L-seryl-[protein] + UTP = O-(5'-uridylyl)-L-seryl-[protein] + diphosphate</text>
        <dbReference type="Rhea" id="RHEA:64604"/>
        <dbReference type="Rhea" id="RHEA-COMP:9863"/>
        <dbReference type="Rhea" id="RHEA-COMP:16635"/>
        <dbReference type="ChEBI" id="CHEBI:29999"/>
        <dbReference type="ChEBI" id="CHEBI:33019"/>
        <dbReference type="ChEBI" id="CHEBI:46398"/>
        <dbReference type="ChEBI" id="CHEBI:156051"/>
    </reaction>
</comment>
<comment type="catalytic activity">
    <reaction evidence="1">
        <text>L-tyrosyl-[protein] + UTP = O-(5'-uridylyl)-L-tyrosyl-[protein] + diphosphate</text>
        <dbReference type="Rhea" id="RHEA:83887"/>
        <dbReference type="Rhea" id="RHEA-COMP:10136"/>
        <dbReference type="Rhea" id="RHEA-COMP:20238"/>
        <dbReference type="ChEBI" id="CHEBI:33019"/>
        <dbReference type="ChEBI" id="CHEBI:46398"/>
        <dbReference type="ChEBI" id="CHEBI:46858"/>
        <dbReference type="ChEBI" id="CHEBI:90602"/>
    </reaction>
</comment>
<comment type="cofactor">
    <cofactor evidence="1">
        <name>Mg(2+)</name>
        <dbReference type="ChEBI" id="CHEBI:18420"/>
    </cofactor>
    <cofactor evidence="1">
        <name>Mn(2+)</name>
        <dbReference type="ChEBI" id="CHEBI:29035"/>
    </cofactor>
</comment>
<comment type="similarity">
    <text evidence="1">Belongs to the SELO family.</text>
</comment>
<feature type="chain" id="PRO_1000045250" description="Protein nucleotidyltransferase YdiU">
    <location>
        <begin position="1"/>
        <end position="481"/>
    </location>
</feature>
<feature type="active site" description="Proton acceptor" evidence="1">
    <location>
        <position position="249"/>
    </location>
</feature>
<feature type="binding site" evidence="1">
    <location>
        <position position="87"/>
    </location>
    <ligand>
        <name>ATP</name>
        <dbReference type="ChEBI" id="CHEBI:30616"/>
    </ligand>
</feature>
<feature type="binding site" evidence="1">
    <location>
        <position position="89"/>
    </location>
    <ligand>
        <name>ATP</name>
        <dbReference type="ChEBI" id="CHEBI:30616"/>
    </ligand>
</feature>
<feature type="binding site" evidence="1">
    <location>
        <position position="90"/>
    </location>
    <ligand>
        <name>ATP</name>
        <dbReference type="ChEBI" id="CHEBI:30616"/>
    </ligand>
</feature>
<feature type="binding site" evidence="1">
    <location>
        <position position="110"/>
    </location>
    <ligand>
        <name>ATP</name>
        <dbReference type="ChEBI" id="CHEBI:30616"/>
    </ligand>
</feature>
<feature type="binding site" evidence="1">
    <location>
        <position position="122"/>
    </location>
    <ligand>
        <name>ATP</name>
        <dbReference type="ChEBI" id="CHEBI:30616"/>
    </ligand>
</feature>
<feature type="binding site" evidence="1">
    <location>
        <position position="123"/>
    </location>
    <ligand>
        <name>ATP</name>
        <dbReference type="ChEBI" id="CHEBI:30616"/>
    </ligand>
</feature>
<feature type="binding site" evidence="1">
    <location>
        <position position="173"/>
    </location>
    <ligand>
        <name>ATP</name>
        <dbReference type="ChEBI" id="CHEBI:30616"/>
    </ligand>
</feature>
<feature type="binding site" evidence="1">
    <location>
        <position position="180"/>
    </location>
    <ligand>
        <name>ATP</name>
        <dbReference type="ChEBI" id="CHEBI:30616"/>
    </ligand>
</feature>
<feature type="binding site" evidence="1">
    <location>
        <position position="250"/>
    </location>
    <ligand>
        <name>Mg(2+)</name>
        <dbReference type="ChEBI" id="CHEBI:18420"/>
    </ligand>
</feature>
<feature type="binding site" evidence="1">
    <location>
        <position position="259"/>
    </location>
    <ligand>
        <name>ATP</name>
        <dbReference type="ChEBI" id="CHEBI:30616"/>
    </ligand>
</feature>
<feature type="binding site" evidence="1">
    <location>
        <position position="259"/>
    </location>
    <ligand>
        <name>Mg(2+)</name>
        <dbReference type="ChEBI" id="CHEBI:18420"/>
    </ligand>
</feature>
<gene>
    <name evidence="1" type="primary">ydiU</name>
    <name evidence="1" type="synonym">selO</name>
    <name type="ordered locus">Mkms_5290</name>
</gene>
<proteinExistence type="inferred from homology"/>
<evidence type="ECO:0000255" key="1">
    <source>
        <dbReference type="HAMAP-Rule" id="MF_00692"/>
    </source>
</evidence>
<reference key="1">
    <citation type="submission" date="2006-12" db="EMBL/GenBank/DDBJ databases">
        <title>Complete sequence of chromosome of Mycobacterium sp. KMS.</title>
        <authorList>
            <consortium name="US DOE Joint Genome Institute"/>
            <person name="Copeland A."/>
            <person name="Lucas S."/>
            <person name="Lapidus A."/>
            <person name="Barry K."/>
            <person name="Detter J.C."/>
            <person name="Glavina del Rio T."/>
            <person name="Hammon N."/>
            <person name="Israni S."/>
            <person name="Dalin E."/>
            <person name="Tice H."/>
            <person name="Pitluck S."/>
            <person name="Kiss H."/>
            <person name="Brettin T."/>
            <person name="Bruce D."/>
            <person name="Han C."/>
            <person name="Tapia R."/>
            <person name="Gilna P."/>
            <person name="Schmutz J."/>
            <person name="Larimer F."/>
            <person name="Land M."/>
            <person name="Hauser L."/>
            <person name="Kyrpides N."/>
            <person name="Mikhailova N."/>
            <person name="Miller C.D."/>
            <person name="Richardson P."/>
        </authorList>
    </citation>
    <scope>NUCLEOTIDE SEQUENCE [LARGE SCALE GENOMIC DNA]</scope>
    <source>
        <strain>KMS</strain>
    </source>
</reference>
<name>SELO_MYCSK</name>
<protein>
    <recommendedName>
        <fullName evidence="1">Protein nucleotidyltransferase YdiU</fullName>
        <ecNumber evidence="1">2.7.7.-</ecNumber>
    </recommendedName>
    <alternativeName>
        <fullName evidence="1">Protein adenylyltransferase YdiU</fullName>
        <ecNumber evidence="1">2.7.7.108</ecNumber>
    </alternativeName>
    <alternativeName>
        <fullName evidence="1">Protein uridylyltransferase YdiU</fullName>
        <ecNumber evidence="1">2.7.7.-</ecNumber>
    </alternativeName>
</protein>
<sequence>MTNLSLDGRFARELPEMAVRWKAEEAPDPRLLVLNDELASGLGLDADWLRSPDGVRLLVGNSVPDGATPVAQAYAGHQFGGFAPRLGDGRALLLGELVDGDGRMRDVHLKGSGHTPFARAGDGLAAVGPMLREYLVSEAMHALGIPTTRSLAVVATGRPVRRESVLDGAVLTRVASSHLRVGSFQYAAVTGDTDLVRRLAGHAIARHHPEVAGAADPYLGLFEAVCSAQAQLIARWMLVGFVHGVMNTDNMTISGETIDYGPCAFMDVYDPETVFSSIDSWGRYAYGNQPSIAAWNLARFAETLLPLFDDDIDRAITLAQNALGAFGRHYEGALTAGMQAKLGLTGVDGPAVAPLLDELLKLLQDNHIDFTSFFRALGLAARGDNEPVRGLFVDLAGFDAWLDSWRALGPDGAAMDRVNPVYIPRNHLVEEALTAAAAGDMEPFETLLDAVTGPFDERPGLQRYAEPAPEAFGRYRTFCGT</sequence>
<keyword id="KW-0067">ATP-binding</keyword>
<keyword id="KW-0460">Magnesium</keyword>
<keyword id="KW-0464">Manganese</keyword>
<keyword id="KW-0479">Metal-binding</keyword>
<keyword id="KW-0547">Nucleotide-binding</keyword>
<keyword id="KW-0548">Nucleotidyltransferase</keyword>
<keyword id="KW-0808">Transferase</keyword>
<dbReference type="EC" id="2.7.7.-" evidence="1"/>
<dbReference type="EC" id="2.7.7.108" evidence="1"/>
<dbReference type="EMBL" id="CP000518">
    <property type="protein sequence ID" value="ABL94478.1"/>
    <property type="molecule type" value="Genomic_DNA"/>
</dbReference>
<dbReference type="SMR" id="A1UNS0"/>
<dbReference type="STRING" id="189918.Mkms_5290"/>
<dbReference type="KEGG" id="mkm:Mkms_5290"/>
<dbReference type="HOGENOM" id="CLU_010245_4_1_11"/>
<dbReference type="OrthoDB" id="9776281at2"/>
<dbReference type="GO" id="GO:0070733">
    <property type="term" value="F:AMPylase activity"/>
    <property type="evidence" value="ECO:0007669"/>
    <property type="project" value="TreeGrafter"/>
</dbReference>
<dbReference type="GO" id="GO:0005524">
    <property type="term" value="F:ATP binding"/>
    <property type="evidence" value="ECO:0007669"/>
    <property type="project" value="UniProtKB-UniRule"/>
</dbReference>
<dbReference type="GO" id="GO:0000287">
    <property type="term" value="F:magnesium ion binding"/>
    <property type="evidence" value="ECO:0007669"/>
    <property type="project" value="UniProtKB-UniRule"/>
</dbReference>
<dbReference type="HAMAP" id="MF_00692">
    <property type="entry name" value="YdiU_SelO"/>
    <property type="match status" value="1"/>
</dbReference>
<dbReference type="InterPro" id="IPR003846">
    <property type="entry name" value="SelO"/>
</dbReference>
<dbReference type="NCBIfam" id="NF000658">
    <property type="entry name" value="PRK00029.1"/>
    <property type="match status" value="1"/>
</dbReference>
<dbReference type="PANTHER" id="PTHR32057">
    <property type="entry name" value="PROTEIN ADENYLYLTRANSFERASE SELO, MITOCHONDRIAL"/>
    <property type="match status" value="1"/>
</dbReference>
<dbReference type="PANTHER" id="PTHR32057:SF14">
    <property type="entry name" value="PROTEIN ADENYLYLTRANSFERASE SELO, MITOCHONDRIAL"/>
    <property type="match status" value="1"/>
</dbReference>
<dbReference type="Pfam" id="PF02696">
    <property type="entry name" value="SelO"/>
    <property type="match status" value="1"/>
</dbReference>